<comment type="function">
    <text evidence="1">Plays a role in viral cell-to-cell propagation, by facilitating genome transport to neighboring plant cells through plasmosdesmata,.</text>
</comment>
<comment type="subcellular location">
    <subcellularLocation>
        <location evidence="1">Host endoplasmic reticulum membrane</location>
    </subcellularLocation>
</comment>
<comment type="miscellaneous">
    <text>TGBp1, TGBp2 and TGBp3 seem to act together for cell-to-cell propagation. TGBp1 is the main movement protein that physically cross the plasmodesma with the viral genome. TGBp2 and TGBp3 would facilitate TGBp1 function.</text>
</comment>
<comment type="similarity">
    <text evidence="3">Belongs to the Tymovirales TGBp2 protein family.</text>
</comment>
<sequence>MSSTSEPTYQLAPPDSLKQVYLTLAAGFAVGLGIFLLRTNTLPHTGDNIHHLPHGGCYRDGTKSIRYNSPGVATSSNIFLPAVAVLCILALLHVPFFQPDRVRRRCCRFYWCADPHHPTV</sequence>
<evidence type="ECO:0000250" key="1"/>
<evidence type="ECO:0000255" key="2"/>
<evidence type="ECO:0000305" key="3"/>
<name>TGB2_LOLV</name>
<dbReference type="EMBL" id="EU489641">
    <property type="protein sequence ID" value="ACA53376.1"/>
    <property type="molecule type" value="Genomic_RNA"/>
</dbReference>
<dbReference type="RefSeq" id="YP_001718501.1">
    <property type="nucleotide sequence ID" value="NC_010434.1"/>
</dbReference>
<dbReference type="KEGG" id="vg:6000097"/>
<dbReference type="Proteomes" id="UP000008689">
    <property type="component" value="Segment"/>
</dbReference>
<dbReference type="GO" id="GO:0044167">
    <property type="term" value="C:host cell endoplasmic reticulum membrane"/>
    <property type="evidence" value="ECO:0007669"/>
    <property type="project" value="UniProtKB-SubCell"/>
</dbReference>
<dbReference type="GO" id="GO:0016020">
    <property type="term" value="C:membrane"/>
    <property type="evidence" value="ECO:0007669"/>
    <property type="project" value="UniProtKB-KW"/>
</dbReference>
<dbReference type="InterPro" id="IPR001896">
    <property type="entry name" value="Plant_vir_prot"/>
</dbReference>
<dbReference type="Pfam" id="PF01307">
    <property type="entry name" value="Plant_vir_prot"/>
    <property type="match status" value="1"/>
</dbReference>
<reference key="1">
    <citation type="submission" date="2008-03" db="EMBL/GenBank/DDBJ databases">
        <title>Molecular characterization of Lolium latent virus, proposed type member of a new genus in the family Flexiviridae.</title>
        <authorList>
            <person name="Vaira A.M.V."/>
            <person name="Maroon-Lango C.J."/>
            <person name="Hammond J."/>
        </authorList>
    </citation>
    <scope>NUCLEOTIDE SEQUENCE [GENOMIC RNA]</scope>
</reference>
<protein>
    <recommendedName>
        <fullName>Movement protein TGB2</fullName>
    </recommendedName>
    <alternativeName>
        <fullName>14 kDa protein</fullName>
    </alternativeName>
    <alternativeName>
        <fullName>Triple gene block 2 protein</fullName>
        <shortName>TGBp2</shortName>
    </alternativeName>
</protein>
<keyword id="KW-1038">Host endoplasmic reticulum</keyword>
<keyword id="KW-1043">Host membrane</keyword>
<keyword id="KW-0472">Membrane</keyword>
<keyword id="KW-1185">Reference proteome</keyword>
<keyword id="KW-0812">Transmembrane</keyword>
<keyword id="KW-1133">Transmembrane helix</keyword>
<accession>B1PS78</accession>
<feature type="chain" id="PRO_0000401075" description="Movement protein TGB2">
    <location>
        <begin position="1"/>
        <end position="120"/>
    </location>
</feature>
<feature type="topological domain" description="Cytoplasmic" evidence="1">
    <location>
        <begin position="1"/>
        <end position="16"/>
    </location>
</feature>
<feature type="transmembrane region" description="Helical" evidence="2">
    <location>
        <begin position="17"/>
        <end position="37"/>
    </location>
</feature>
<feature type="topological domain" description="Lumenal" evidence="1">
    <location>
        <begin position="38"/>
        <end position="76"/>
    </location>
</feature>
<feature type="transmembrane region" description="Helical" evidence="2">
    <location>
        <begin position="77"/>
        <end position="97"/>
    </location>
</feature>
<feature type="topological domain" description="Cytoplasmic" evidence="1">
    <location>
        <begin position="98"/>
        <end position="120"/>
    </location>
</feature>
<organism>
    <name type="scientific">Lolium latent virus (isolate Lolium/USA/US1/-)</name>
    <name type="common">LoLV</name>
    <dbReference type="NCBI Taxonomy" id="686945"/>
    <lineage>
        <taxon>Viruses</taxon>
        <taxon>Riboviria</taxon>
        <taxon>Orthornavirae</taxon>
        <taxon>Kitrinoviricota</taxon>
        <taxon>Alsuviricetes</taxon>
        <taxon>Tymovirales</taxon>
        <taxon>Alphaflexiviridae</taxon>
        <taxon>Lolavirus</taxon>
        <taxon>Lolium latent virus</taxon>
    </lineage>
</organism>
<proteinExistence type="inferred from homology"/>
<gene>
    <name type="primary">ORF3</name>
</gene>
<organismHost>
    <name type="scientific">Lolium multiflorum x Lolium perenne</name>
    <dbReference type="NCBI Taxonomy" id="480553"/>
</organismHost>